<name>YTFI_ECOLI</name>
<gene>
    <name type="primary">ytfI</name>
    <name type="ordered locus">b4215</name>
    <name type="ordered locus">JW5748</name>
</gene>
<evidence type="ECO:0000305" key="1"/>
<proteinExistence type="predicted"/>
<accession>P39317</accession>
<accession>Q2M690</accession>
<feature type="chain" id="PRO_0000169826" description="Uncharacterized protein YtfI">
    <location>
        <begin position="1"/>
        <end position="312"/>
    </location>
</feature>
<keyword id="KW-1185">Reference proteome</keyword>
<dbReference type="EMBL" id="U14003">
    <property type="protein sequence ID" value="AAA97111.1"/>
    <property type="status" value="ALT_FRAME"/>
    <property type="molecule type" value="Genomic_DNA"/>
</dbReference>
<dbReference type="EMBL" id="U00096">
    <property type="protein sequence ID" value="AAT48243.1"/>
    <property type="molecule type" value="Genomic_DNA"/>
</dbReference>
<dbReference type="EMBL" id="AP009048">
    <property type="protein sequence ID" value="BAE78216.1"/>
    <property type="molecule type" value="Genomic_DNA"/>
</dbReference>
<dbReference type="PIR" id="S56440">
    <property type="entry name" value="S56440"/>
</dbReference>
<dbReference type="RefSeq" id="WP_000937655.1">
    <property type="nucleotide sequence ID" value="NZ_JACEFS010000014.1"/>
</dbReference>
<dbReference type="RefSeq" id="YP_026285.1">
    <property type="nucleotide sequence ID" value="NC_000913.3"/>
</dbReference>
<dbReference type="BioGRID" id="4259305">
    <property type="interactions" value="28"/>
</dbReference>
<dbReference type="FunCoup" id="P39317">
    <property type="interactions" value="13"/>
</dbReference>
<dbReference type="STRING" id="511145.b4215"/>
<dbReference type="PaxDb" id="511145-b4215"/>
<dbReference type="EnsemblBacteria" id="AAT48243">
    <property type="protein sequence ID" value="AAT48243"/>
    <property type="gene ID" value="b4215"/>
</dbReference>
<dbReference type="GeneID" id="948738"/>
<dbReference type="KEGG" id="ecj:JW5748"/>
<dbReference type="KEGG" id="eco:b4215"/>
<dbReference type="KEGG" id="ecoc:C3026_22765"/>
<dbReference type="PATRIC" id="fig|511145.12.peg.4347"/>
<dbReference type="EchoBASE" id="EB2402"/>
<dbReference type="eggNOG" id="ENOG5033S2K">
    <property type="taxonomic scope" value="Bacteria"/>
</dbReference>
<dbReference type="HOGENOM" id="CLU_088882_0_0_6"/>
<dbReference type="InParanoid" id="P39317"/>
<dbReference type="OMA" id="WEFFRCA"/>
<dbReference type="BioCyc" id="EcoCyc:G7870-MONOMER"/>
<dbReference type="PRO" id="PR:P39317"/>
<dbReference type="Proteomes" id="UP000000625">
    <property type="component" value="Chromosome"/>
</dbReference>
<protein>
    <recommendedName>
        <fullName>Uncharacterized protein YtfI</fullName>
    </recommendedName>
</protein>
<sequence>MLPRIRHNNFIGAVELFVKSSYTKTHSNNFFNNIHHAFKKKDWISNYDSLLTLREFFRCATQIDKSGYQVLSSKNETVHAMDKFLISFSLKDNGAEYTMTLRGSGFEYEEIPITINEYNSFMDFKNREFPLEQNRRLYAWDILQKKQSDIPKRIKGYIHQAIGDVSLGYALLEDIVSKLKRGKFELQIPGGGIKECDGWYIYEKIIDDNFAIVIESLGFALKIYGGDERFRNGSSVVLEDEDYSLIYNFLVNAGCQQVELAEQVDAIVSANLAADSDITKEKICEKYKSTIEAFKKEQLALPVLVRRKNSET</sequence>
<comment type="sequence caution" evidence="1">
    <conflict type="frameshift">
        <sequence resource="EMBL-CDS" id="AAA97111"/>
    </conflict>
</comment>
<reference key="1">
    <citation type="journal article" date="1995" name="Nucleic Acids Res.">
        <title>Analysis of the Escherichia coli genome VI: DNA sequence of the region from 92.8 through 100 minutes.</title>
        <authorList>
            <person name="Burland V.D."/>
            <person name="Plunkett G. III"/>
            <person name="Sofia H.J."/>
            <person name="Daniels D.L."/>
            <person name="Blattner F.R."/>
        </authorList>
    </citation>
    <scope>NUCLEOTIDE SEQUENCE [LARGE SCALE GENOMIC DNA]</scope>
    <source>
        <strain>K12 / MG1655 / ATCC 47076</strain>
    </source>
</reference>
<reference key="2">
    <citation type="journal article" date="1997" name="Science">
        <title>The complete genome sequence of Escherichia coli K-12.</title>
        <authorList>
            <person name="Blattner F.R."/>
            <person name="Plunkett G. III"/>
            <person name="Bloch C.A."/>
            <person name="Perna N.T."/>
            <person name="Burland V."/>
            <person name="Riley M."/>
            <person name="Collado-Vides J."/>
            <person name="Glasner J.D."/>
            <person name="Rode C.K."/>
            <person name="Mayhew G.F."/>
            <person name="Gregor J."/>
            <person name="Davis N.W."/>
            <person name="Kirkpatrick H.A."/>
            <person name="Goeden M.A."/>
            <person name="Rose D.J."/>
            <person name="Mau B."/>
            <person name="Shao Y."/>
        </authorList>
    </citation>
    <scope>NUCLEOTIDE SEQUENCE [LARGE SCALE GENOMIC DNA]</scope>
    <source>
        <strain>K12 / MG1655 / ATCC 47076</strain>
    </source>
</reference>
<reference key="3">
    <citation type="journal article" date="2006" name="Nucleic Acids Res.">
        <title>Escherichia coli K-12: a cooperatively developed annotation snapshot -- 2005.</title>
        <authorList>
            <person name="Riley M."/>
            <person name="Abe T."/>
            <person name="Arnaud M.B."/>
            <person name="Berlyn M.K.B."/>
            <person name="Blattner F.R."/>
            <person name="Chaudhuri R.R."/>
            <person name="Glasner J.D."/>
            <person name="Horiuchi T."/>
            <person name="Keseler I.M."/>
            <person name="Kosuge T."/>
            <person name="Mori H."/>
            <person name="Perna N.T."/>
            <person name="Plunkett G. III"/>
            <person name="Rudd K.E."/>
            <person name="Serres M.H."/>
            <person name="Thomas G.H."/>
            <person name="Thomson N.R."/>
            <person name="Wishart D."/>
            <person name="Wanner B.L."/>
        </authorList>
    </citation>
    <scope>SEQUENCE REVISION</scope>
</reference>
<reference key="4">
    <citation type="journal article" date="2006" name="Mol. Syst. Biol.">
        <title>Highly accurate genome sequences of Escherichia coli K-12 strains MG1655 and W3110.</title>
        <authorList>
            <person name="Hayashi K."/>
            <person name="Morooka N."/>
            <person name="Yamamoto Y."/>
            <person name="Fujita K."/>
            <person name="Isono K."/>
            <person name="Choi S."/>
            <person name="Ohtsubo E."/>
            <person name="Baba T."/>
            <person name="Wanner B.L."/>
            <person name="Mori H."/>
            <person name="Horiuchi T."/>
        </authorList>
    </citation>
    <scope>NUCLEOTIDE SEQUENCE [LARGE SCALE GENOMIC DNA]</scope>
    <source>
        <strain>K12 / W3110 / ATCC 27325 / DSM 5911</strain>
    </source>
</reference>
<organism>
    <name type="scientific">Escherichia coli (strain K12)</name>
    <dbReference type="NCBI Taxonomy" id="83333"/>
    <lineage>
        <taxon>Bacteria</taxon>
        <taxon>Pseudomonadati</taxon>
        <taxon>Pseudomonadota</taxon>
        <taxon>Gammaproteobacteria</taxon>
        <taxon>Enterobacterales</taxon>
        <taxon>Enterobacteriaceae</taxon>
        <taxon>Escherichia</taxon>
    </lineage>
</organism>